<reference key="1">
    <citation type="journal article" date="1998" name="Nature">
        <title>Deciphering the biology of Mycobacterium tuberculosis from the complete genome sequence.</title>
        <authorList>
            <person name="Cole S.T."/>
            <person name="Brosch R."/>
            <person name="Parkhill J."/>
            <person name="Garnier T."/>
            <person name="Churcher C.M."/>
            <person name="Harris D.E."/>
            <person name="Gordon S.V."/>
            <person name="Eiglmeier K."/>
            <person name="Gas S."/>
            <person name="Barry C.E. III"/>
            <person name="Tekaia F."/>
            <person name="Badcock K."/>
            <person name="Basham D."/>
            <person name="Brown D."/>
            <person name="Chillingworth T."/>
            <person name="Connor R."/>
            <person name="Davies R.M."/>
            <person name="Devlin K."/>
            <person name="Feltwell T."/>
            <person name="Gentles S."/>
            <person name="Hamlin N."/>
            <person name="Holroyd S."/>
            <person name="Hornsby T."/>
            <person name="Jagels K."/>
            <person name="Krogh A."/>
            <person name="McLean J."/>
            <person name="Moule S."/>
            <person name="Murphy L.D."/>
            <person name="Oliver S."/>
            <person name="Osborne J."/>
            <person name="Quail M.A."/>
            <person name="Rajandream M.A."/>
            <person name="Rogers J."/>
            <person name="Rutter S."/>
            <person name="Seeger K."/>
            <person name="Skelton S."/>
            <person name="Squares S."/>
            <person name="Squares R."/>
            <person name="Sulston J.E."/>
            <person name="Taylor K."/>
            <person name="Whitehead S."/>
            <person name="Barrell B.G."/>
        </authorList>
    </citation>
    <scope>NUCLEOTIDE SEQUENCE [LARGE SCALE GENOMIC DNA]</scope>
    <source>
        <strain>ATCC 25618 / H37Rv</strain>
    </source>
</reference>
<reference key="2">
    <citation type="journal article" date="2010" name="PLoS ONE">
        <title>Prokaryotic ubiquitin-like protein (Pup) proteome of Mycobacterium tuberculosis.</title>
        <authorList>
            <person name="Festa R.A."/>
            <person name="McAllister F."/>
            <person name="Pearce M.J."/>
            <person name="Mintseris J."/>
            <person name="Burns K.E."/>
            <person name="Gygi S.P."/>
            <person name="Darwin K.H."/>
        </authorList>
    </citation>
    <scope>PUPYLATION AT LYS-45</scope>
    <scope>IDENTIFICATION BY MASS SPECTROMETRY</scope>
    <source>
        <strain>ATCC 25618 / H37Rv</strain>
    </source>
</reference>
<reference key="3">
    <citation type="journal article" date="2011" name="Mol. Cell. Proteomics">
        <title>Proteogenomic analysis of Mycobacterium tuberculosis by high resolution mass spectrometry.</title>
        <authorList>
            <person name="Kelkar D.S."/>
            <person name="Kumar D."/>
            <person name="Kumar P."/>
            <person name="Balakrishnan L."/>
            <person name="Muthusamy B."/>
            <person name="Yadav A.K."/>
            <person name="Shrivastava P."/>
            <person name="Marimuthu A."/>
            <person name="Anand S."/>
            <person name="Sundaram H."/>
            <person name="Kingsbury R."/>
            <person name="Harsha H.C."/>
            <person name="Nair B."/>
            <person name="Prasad T.S."/>
            <person name="Chauhan D.S."/>
            <person name="Katoch K."/>
            <person name="Katoch V.M."/>
            <person name="Kumar P."/>
            <person name="Chaerkady R."/>
            <person name="Ramachandran S."/>
            <person name="Dash D."/>
            <person name="Pandey A."/>
        </authorList>
    </citation>
    <scope>ACETYLATION [LARGE SCALE ANALYSIS] AT THR-2</scope>
    <scope>CLEAVAGE OF INITIATOR METHIONINE [LARGE SCALE ANALYSIS]</scope>
    <scope>IDENTIFICATION BY MASS SPECTROMETRY [LARGE SCALE ANALYSIS]</scope>
    <source>
        <strain>ATCC 25618 / H37Rv</strain>
    </source>
</reference>
<feature type="initiator methionine" description="Removed" evidence="6">
    <location>
        <position position="1"/>
    </location>
</feature>
<feature type="chain" id="PRO_0000118696" description="NADH-quinone oxidoreductase subunit E">
    <location>
        <begin position="2"/>
        <end position="252"/>
    </location>
</feature>
<feature type="region of interest" description="Disordered" evidence="3">
    <location>
        <begin position="211"/>
        <end position="252"/>
    </location>
</feature>
<feature type="binding site" evidence="2">
    <location>
        <position position="114"/>
    </location>
    <ligand>
        <name>[2Fe-2S] cluster</name>
        <dbReference type="ChEBI" id="CHEBI:190135"/>
    </ligand>
</feature>
<feature type="binding site" evidence="2">
    <location>
        <position position="119"/>
    </location>
    <ligand>
        <name>[2Fe-2S] cluster</name>
        <dbReference type="ChEBI" id="CHEBI:190135"/>
    </ligand>
</feature>
<feature type="binding site" evidence="2">
    <location>
        <position position="155"/>
    </location>
    <ligand>
        <name>[2Fe-2S] cluster</name>
        <dbReference type="ChEBI" id="CHEBI:190135"/>
    </ligand>
</feature>
<feature type="binding site" evidence="2">
    <location>
        <position position="159"/>
    </location>
    <ligand>
        <name>[2Fe-2S] cluster</name>
        <dbReference type="ChEBI" id="CHEBI:190135"/>
    </ligand>
</feature>
<feature type="modified residue" description="N-acetylthreonine" evidence="6">
    <location>
        <position position="2"/>
    </location>
</feature>
<feature type="cross-link" description="Isoglutamyl lysine isopeptide (Lys-Gln) (interchain with Q-Cter in protein Pup)" evidence="4">
    <location>
        <position position="45"/>
    </location>
</feature>
<sequence length="252" mass="27198">MTQPPGQPVFIRLGPPPDEPNQFVVEGAPRSYPPDVLARLEVDAKEIIGRYPDRRSALLPLLHLVQGEDSYLTPAGLRFCADQLGLTGAEVSAVASFYTMYRRRPTGEYLVGVCTNTLCAVMGGDAIFDRLKEHLGVGHDETTSDGVVTLQHIECNAACDYAPVVMVNWEFFDNQTPESARELVDSLRSDTPKAPTRGAPLCGFRQTSRILAGLPDQRPDEGQGGPGAPTLAGLQVARKNDMQAPPTPGADE</sequence>
<comment type="function">
    <text evidence="1">NDH-1 shuttles electrons from NADH, via FMN and iron-sulfur (Fe-S) centers, to quinones in the respiratory chain. The immediate electron acceptor for the enzyme in this species is believed to be menaquinone. Couples the redox reaction to proton translocation (for every two electrons transferred, four hydrogen ions are translocated across the cytoplasmic membrane), and thus conserves the redox energy in a proton gradient (By similarity).</text>
</comment>
<comment type="catalytic activity">
    <reaction>
        <text>a quinone + NADH + 5 H(+)(in) = a quinol + NAD(+) + 4 H(+)(out)</text>
        <dbReference type="Rhea" id="RHEA:57888"/>
        <dbReference type="ChEBI" id="CHEBI:15378"/>
        <dbReference type="ChEBI" id="CHEBI:24646"/>
        <dbReference type="ChEBI" id="CHEBI:57540"/>
        <dbReference type="ChEBI" id="CHEBI:57945"/>
        <dbReference type="ChEBI" id="CHEBI:132124"/>
    </reaction>
</comment>
<comment type="cofactor">
    <cofactor evidence="5">
        <name>[2Fe-2S] cluster</name>
        <dbReference type="ChEBI" id="CHEBI:190135"/>
    </cofactor>
    <text evidence="5">Binds 1 [2Fe-2S] cluster.</text>
</comment>
<comment type="similarity">
    <text evidence="5">Belongs to the complex I 24 kDa subunit family.</text>
</comment>
<keyword id="KW-0001">2Fe-2S</keyword>
<keyword id="KW-0007">Acetylation</keyword>
<keyword id="KW-0408">Iron</keyword>
<keyword id="KW-0411">Iron-sulfur</keyword>
<keyword id="KW-1017">Isopeptide bond</keyword>
<keyword id="KW-0479">Metal-binding</keyword>
<keyword id="KW-0520">NAD</keyword>
<keyword id="KW-0874">Quinone</keyword>
<keyword id="KW-1185">Reference proteome</keyword>
<keyword id="KW-1278">Translocase</keyword>
<keyword id="KW-0832">Ubl conjugation</keyword>
<proteinExistence type="evidence at protein level"/>
<gene>
    <name type="primary">nuoE</name>
    <name type="ordered locus">Rv3149</name>
    <name type="ORF">MTCY03A2.09c</name>
</gene>
<accession>P9WIV5</accession>
<accession>L0TEG3</accession>
<accession>P65573</accession>
<accession>P95177</accession>
<name>NUOE_MYCTU</name>
<evidence type="ECO:0000250" key="1"/>
<evidence type="ECO:0000255" key="2"/>
<evidence type="ECO:0000256" key="3">
    <source>
        <dbReference type="SAM" id="MobiDB-lite"/>
    </source>
</evidence>
<evidence type="ECO:0000269" key="4">
    <source>
    </source>
</evidence>
<evidence type="ECO:0000305" key="5"/>
<evidence type="ECO:0007744" key="6">
    <source>
    </source>
</evidence>
<organism>
    <name type="scientific">Mycobacterium tuberculosis (strain ATCC 25618 / H37Rv)</name>
    <dbReference type="NCBI Taxonomy" id="83332"/>
    <lineage>
        <taxon>Bacteria</taxon>
        <taxon>Bacillati</taxon>
        <taxon>Actinomycetota</taxon>
        <taxon>Actinomycetes</taxon>
        <taxon>Mycobacteriales</taxon>
        <taxon>Mycobacteriaceae</taxon>
        <taxon>Mycobacterium</taxon>
        <taxon>Mycobacterium tuberculosis complex</taxon>
    </lineage>
</organism>
<dbReference type="EC" id="7.1.1.-"/>
<dbReference type="EMBL" id="AL123456">
    <property type="protein sequence ID" value="CCP45960.1"/>
    <property type="molecule type" value="Genomic_DNA"/>
</dbReference>
<dbReference type="PIR" id="F70647">
    <property type="entry name" value="F70647"/>
</dbReference>
<dbReference type="RefSeq" id="NP_217665.1">
    <property type="nucleotide sequence ID" value="NC_000962.3"/>
</dbReference>
<dbReference type="RefSeq" id="WP_003416434.1">
    <property type="nucleotide sequence ID" value="NZ_NVQJ01000019.1"/>
</dbReference>
<dbReference type="SMR" id="P9WIV5"/>
<dbReference type="FunCoup" id="P9WIV5">
    <property type="interactions" value="467"/>
</dbReference>
<dbReference type="STRING" id="83332.Rv3149"/>
<dbReference type="iPTMnet" id="P9WIV5"/>
<dbReference type="PaxDb" id="83332-Rv3149"/>
<dbReference type="DNASU" id="887903"/>
<dbReference type="GeneID" id="887903"/>
<dbReference type="KEGG" id="mtu:Rv3149"/>
<dbReference type="KEGG" id="mtv:RVBD_3149"/>
<dbReference type="TubercuList" id="Rv3149"/>
<dbReference type="eggNOG" id="COG1905">
    <property type="taxonomic scope" value="Bacteria"/>
</dbReference>
<dbReference type="InParanoid" id="P9WIV5"/>
<dbReference type="OrthoDB" id="9807941at2"/>
<dbReference type="PhylomeDB" id="P9WIV5"/>
<dbReference type="Proteomes" id="UP000001584">
    <property type="component" value="Chromosome"/>
</dbReference>
<dbReference type="GO" id="GO:0051537">
    <property type="term" value="F:2 iron, 2 sulfur cluster binding"/>
    <property type="evidence" value="ECO:0007669"/>
    <property type="project" value="UniProtKB-KW"/>
</dbReference>
<dbReference type="GO" id="GO:0046872">
    <property type="term" value="F:metal ion binding"/>
    <property type="evidence" value="ECO:0007669"/>
    <property type="project" value="UniProtKB-KW"/>
</dbReference>
<dbReference type="GO" id="GO:0016491">
    <property type="term" value="F:oxidoreductase activity"/>
    <property type="evidence" value="ECO:0007669"/>
    <property type="project" value="InterPro"/>
</dbReference>
<dbReference type="GO" id="GO:0048038">
    <property type="term" value="F:quinone binding"/>
    <property type="evidence" value="ECO:0007669"/>
    <property type="project" value="UniProtKB-KW"/>
</dbReference>
<dbReference type="GO" id="GO:0022904">
    <property type="term" value="P:respiratory electron transport chain"/>
    <property type="evidence" value="ECO:0000318"/>
    <property type="project" value="GO_Central"/>
</dbReference>
<dbReference type="CDD" id="cd03064">
    <property type="entry name" value="TRX_Fd_NuoE"/>
    <property type="match status" value="1"/>
</dbReference>
<dbReference type="FunFam" id="1.10.10.1590:FF:000001">
    <property type="entry name" value="NADH-quinone oxidoreductase subunit E"/>
    <property type="match status" value="1"/>
</dbReference>
<dbReference type="FunFam" id="3.40.30.10:FF:000057">
    <property type="entry name" value="NADH-quinone oxidoreductase subunit E"/>
    <property type="match status" value="1"/>
</dbReference>
<dbReference type="Gene3D" id="3.40.30.10">
    <property type="entry name" value="Glutaredoxin"/>
    <property type="match status" value="1"/>
</dbReference>
<dbReference type="Gene3D" id="1.10.10.1590">
    <property type="entry name" value="NADH-quinone oxidoreductase subunit E"/>
    <property type="match status" value="1"/>
</dbReference>
<dbReference type="InterPro" id="IPR002023">
    <property type="entry name" value="NuoE-like"/>
</dbReference>
<dbReference type="InterPro" id="IPR042128">
    <property type="entry name" value="NuoE_dom"/>
</dbReference>
<dbReference type="InterPro" id="IPR041921">
    <property type="entry name" value="NuoE_N"/>
</dbReference>
<dbReference type="InterPro" id="IPR036249">
    <property type="entry name" value="Thioredoxin-like_sf"/>
</dbReference>
<dbReference type="NCBIfam" id="NF005721">
    <property type="entry name" value="PRK07539.1-1"/>
    <property type="match status" value="1"/>
</dbReference>
<dbReference type="PANTHER" id="PTHR10371:SF3">
    <property type="entry name" value="NADH DEHYDROGENASE [UBIQUINONE] FLAVOPROTEIN 2, MITOCHONDRIAL"/>
    <property type="match status" value="1"/>
</dbReference>
<dbReference type="PANTHER" id="PTHR10371">
    <property type="entry name" value="NADH DEHYDROGENASE UBIQUINONE FLAVOPROTEIN 2, MITOCHONDRIAL"/>
    <property type="match status" value="1"/>
</dbReference>
<dbReference type="Pfam" id="PF01257">
    <property type="entry name" value="2Fe-2S_thioredx"/>
    <property type="match status" value="1"/>
</dbReference>
<dbReference type="PIRSF" id="PIRSF000216">
    <property type="entry name" value="NADH_DH_24kDa"/>
    <property type="match status" value="1"/>
</dbReference>
<dbReference type="SUPFAM" id="SSF52833">
    <property type="entry name" value="Thioredoxin-like"/>
    <property type="match status" value="1"/>
</dbReference>
<dbReference type="PROSITE" id="PS01099">
    <property type="entry name" value="COMPLEX1_24K"/>
    <property type="match status" value="1"/>
</dbReference>
<protein>
    <recommendedName>
        <fullName>NADH-quinone oxidoreductase subunit E</fullName>
        <ecNumber>7.1.1.-</ecNumber>
    </recommendedName>
    <alternativeName>
        <fullName>NADH dehydrogenase I subunit E</fullName>
    </alternativeName>
    <alternativeName>
        <fullName>NDH-1 subunit E</fullName>
    </alternativeName>
</protein>